<dbReference type="EMBL" id="CP001186">
    <property type="protein sequence ID" value="ACK94999.1"/>
    <property type="molecule type" value="Genomic_DNA"/>
</dbReference>
<dbReference type="RefSeq" id="WP_000544289.1">
    <property type="nucleotide sequence ID" value="NC_011772.1"/>
</dbReference>
<dbReference type="SMR" id="B7IJ18"/>
<dbReference type="KEGG" id="bcg:BCG9842_B0607"/>
<dbReference type="HOGENOM" id="CLU_014841_3_2_9"/>
<dbReference type="Proteomes" id="UP000006744">
    <property type="component" value="Chromosome"/>
</dbReference>
<dbReference type="GO" id="GO:0005737">
    <property type="term" value="C:cytoplasm"/>
    <property type="evidence" value="ECO:0007669"/>
    <property type="project" value="UniProtKB-SubCell"/>
</dbReference>
<dbReference type="GO" id="GO:0009380">
    <property type="term" value="C:excinuclease repair complex"/>
    <property type="evidence" value="ECO:0007669"/>
    <property type="project" value="InterPro"/>
</dbReference>
<dbReference type="GO" id="GO:0003677">
    <property type="term" value="F:DNA binding"/>
    <property type="evidence" value="ECO:0007669"/>
    <property type="project" value="UniProtKB-UniRule"/>
</dbReference>
<dbReference type="GO" id="GO:0009381">
    <property type="term" value="F:excinuclease ABC activity"/>
    <property type="evidence" value="ECO:0007669"/>
    <property type="project" value="UniProtKB-UniRule"/>
</dbReference>
<dbReference type="GO" id="GO:0006289">
    <property type="term" value="P:nucleotide-excision repair"/>
    <property type="evidence" value="ECO:0007669"/>
    <property type="project" value="UniProtKB-UniRule"/>
</dbReference>
<dbReference type="GO" id="GO:0009432">
    <property type="term" value="P:SOS response"/>
    <property type="evidence" value="ECO:0007669"/>
    <property type="project" value="UniProtKB-UniRule"/>
</dbReference>
<dbReference type="CDD" id="cd10434">
    <property type="entry name" value="GIY-YIG_UvrC_Cho"/>
    <property type="match status" value="1"/>
</dbReference>
<dbReference type="FunFam" id="1.10.150.20:FF:000005">
    <property type="entry name" value="UvrABC system protein C"/>
    <property type="match status" value="1"/>
</dbReference>
<dbReference type="FunFam" id="3.30.420.340:FF:000002">
    <property type="entry name" value="UvrABC system protein C"/>
    <property type="match status" value="1"/>
</dbReference>
<dbReference type="FunFam" id="3.40.1440.10:FF:000001">
    <property type="entry name" value="UvrABC system protein C"/>
    <property type="match status" value="1"/>
</dbReference>
<dbReference type="FunFam" id="4.10.860.10:FF:000002">
    <property type="entry name" value="UvrABC system protein C"/>
    <property type="match status" value="1"/>
</dbReference>
<dbReference type="Gene3D" id="1.10.150.20">
    <property type="entry name" value="5' to 3' exonuclease, C-terminal subdomain"/>
    <property type="match status" value="1"/>
</dbReference>
<dbReference type="Gene3D" id="3.40.1440.10">
    <property type="entry name" value="GIY-YIG endonuclease"/>
    <property type="match status" value="1"/>
</dbReference>
<dbReference type="Gene3D" id="4.10.860.10">
    <property type="entry name" value="UVR domain"/>
    <property type="match status" value="1"/>
</dbReference>
<dbReference type="Gene3D" id="3.30.420.340">
    <property type="entry name" value="UvrC, RNAse H endonuclease domain"/>
    <property type="match status" value="1"/>
</dbReference>
<dbReference type="HAMAP" id="MF_00203">
    <property type="entry name" value="UvrC"/>
    <property type="match status" value="1"/>
</dbReference>
<dbReference type="InterPro" id="IPR000305">
    <property type="entry name" value="GIY-YIG_endonuc"/>
</dbReference>
<dbReference type="InterPro" id="IPR035901">
    <property type="entry name" value="GIY-YIG_endonuc_sf"/>
</dbReference>
<dbReference type="InterPro" id="IPR047296">
    <property type="entry name" value="GIY-YIG_UvrC_Cho"/>
</dbReference>
<dbReference type="InterPro" id="IPR010994">
    <property type="entry name" value="RuvA_2-like"/>
</dbReference>
<dbReference type="InterPro" id="IPR001943">
    <property type="entry name" value="UVR_dom"/>
</dbReference>
<dbReference type="InterPro" id="IPR036876">
    <property type="entry name" value="UVR_dom_sf"/>
</dbReference>
<dbReference type="InterPro" id="IPR050066">
    <property type="entry name" value="UvrABC_protein_C"/>
</dbReference>
<dbReference type="InterPro" id="IPR004791">
    <property type="entry name" value="UvrC"/>
</dbReference>
<dbReference type="InterPro" id="IPR001162">
    <property type="entry name" value="UvrC_RNase_H_dom"/>
</dbReference>
<dbReference type="InterPro" id="IPR038476">
    <property type="entry name" value="UvrC_RNase_H_dom_sf"/>
</dbReference>
<dbReference type="NCBIfam" id="NF001824">
    <property type="entry name" value="PRK00558.1-5"/>
    <property type="match status" value="1"/>
</dbReference>
<dbReference type="NCBIfam" id="TIGR00194">
    <property type="entry name" value="uvrC"/>
    <property type="match status" value="1"/>
</dbReference>
<dbReference type="PANTHER" id="PTHR30562:SF1">
    <property type="entry name" value="UVRABC SYSTEM PROTEIN C"/>
    <property type="match status" value="1"/>
</dbReference>
<dbReference type="PANTHER" id="PTHR30562">
    <property type="entry name" value="UVRC/OXIDOREDUCTASE"/>
    <property type="match status" value="1"/>
</dbReference>
<dbReference type="Pfam" id="PF01541">
    <property type="entry name" value="GIY-YIG"/>
    <property type="match status" value="1"/>
</dbReference>
<dbReference type="Pfam" id="PF02151">
    <property type="entry name" value="UVR"/>
    <property type="match status" value="1"/>
</dbReference>
<dbReference type="Pfam" id="PF22920">
    <property type="entry name" value="UvrC_RNaseH"/>
    <property type="match status" value="1"/>
</dbReference>
<dbReference type="Pfam" id="PF08459">
    <property type="entry name" value="UvrC_RNaseH_dom"/>
    <property type="match status" value="1"/>
</dbReference>
<dbReference type="SMART" id="SM00465">
    <property type="entry name" value="GIYc"/>
    <property type="match status" value="1"/>
</dbReference>
<dbReference type="SUPFAM" id="SSF46600">
    <property type="entry name" value="C-terminal UvrC-binding domain of UvrB"/>
    <property type="match status" value="1"/>
</dbReference>
<dbReference type="SUPFAM" id="SSF82771">
    <property type="entry name" value="GIY-YIG endonuclease"/>
    <property type="match status" value="1"/>
</dbReference>
<dbReference type="SUPFAM" id="SSF47781">
    <property type="entry name" value="RuvA domain 2-like"/>
    <property type="match status" value="1"/>
</dbReference>
<dbReference type="PROSITE" id="PS50164">
    <property type="entry name" value="GIY_YIG"/>
    <property type="match status" value="1"/>
</dbReference>
<dbReference type="PROSITE" id="PS50151">
    <property type="entry name" value="UVR"/>
    <property type="match status" value="1"/>
</dbReference>
<dbReference type="PROSITE" id="PS50165">
    <property type="entry name" value="UVRC"/>
    <property type="match status" value="1"/>
</dbReference>
<sequence>MHEHLKEKLAILPDQPGCYLMKDKQGTVIYVGKAKVLKNRVRSYFTGSHDGKTLRLVGEIVDFEYIVTSSNLEALILELNLIKKYDPKYNIQLKDDKTYPFIKITAEKQPRLLITRNVKKDKGKYFGPYPNAQSAHETKKLLDRMYPLRKCTNMPDKVCLYYHMDQCLAPCVKEVTEEQNKEIVDEIIKFLNGGHKEVRSELEIKMYEASEKLEFERAKELRDQIAHIDAIMEKQKMIMSDLVDRDVFGYAVDKGWMCVQVFFVRKGKLIERDVSMFPIYDEPEEGFLTFIGQFYENSSHFKPKEIVVPGSIDSELVERFLEVEATQPKRGKKKDLVELANKNAKIALEEKFYLIERDEERTIKAVDHLGKQLGIETPYRIEAFDNSNIQGTNPVSAMIAFIDGKPAKKEYRKYKIKTVQGPDDYESMREVVRRRYTRALKENLPLPDLIIIDGGKGHLAAASDILEDELGLYIPMAGLVKDDKHKTSHLIIGDPPEPVVLERNSQEFYLLQRIQDEVHRFAITFHRQLHGKSVIQSALDDIPGIGDKRKKVLLKHFGSLKKMKEASVAEFVEAGMPKNVAETIYTYLTDKKTL</sequence>
<gene>
    <name evidence="1" type="primary">uvrC</name>
    <name type="ordered locus">BCG9842_B0607</name>
</gene>
<evidence type="ECO:0000255" key="1">
    <source>
        <dbReference type="HAMAP-Rule" id="MF_00203"/>
    </source>
</evidence>
<protein>
    <recommendedName>
        <fullName evidence="1">UvrABC system protein C</fullName>
        <shortName evidence="1">Protein UvrC</shortName>
    </recommendedName>
    <alternativeName>
        <fullName evidence="1">Excinuclease ABC subunit C</fullName>
    </alternativeName>
</protein>
<name>UVRC_BACC2</name>
<accession>B7IJ18</accession>
<reference key="1">
    <citation type="submission" date="2008-10" db="EMBL/GenBank/DDBJ databases">
        <title>Genome sequence of Bacillus cereus G9842.</title>
        <authorList>
            <person name="Dodson R.J."/>
            <person name="Durkin A.S."/>
            <person name="Rosovitz M.J."/>
            <person name="Rasko D.A."/>
            <person name="Hoffmaster A."/>
            <person name="Ravel J."/>
            <person name="Sutton G."/>
        </authorList>
    </citation>
    <scope>NUCLEOTIDE SEQUENCE [LARGE SCALE GENOMIC DNA]</scope>
    <source>
        <strain>G9842</strain>
    </source>
</reference>
<comment type="function">
    <text evidence="1">The UvrABC repair system catalyzes the recognition and processing of DNA lesions. UvrC both incises the 5' and 3' sides of the lesion. The N-terminal half is responsible for the 3' incision and the C-terminal half is responsible for the 5' incision.</text>
</comment>
<comment type="subunit">
    <text evidence="1">Interacts with UvrB in an incision complex.</text>
</comment>
<comment type="subcellular location">
    <subcellularLocation>
        <location evidence="1">Cytoplasm</location>
    </subcellularLocation>
</comment>
<comment type="similarity">
    <text evidence="1">Belongs to the UvrC family.</text>
</comment>
<organism>
    <name type="scientific">Bacillus cereus (strain G9842)</name>
    <dbReference type="NCBI Taxonomy" id="405531"/>
    <lineage>
        <taxon>Bacteria</taxon>
        <taxon>Bacillati</taxon>
        <taxon>Bacillota</taxon>
        <taxon>Bacilli</taxon>
        <taxon>Bacillales</taxon>
        <taxon>Bacillaceae</taxon>
        <taxon>Bacillus</taxon>
        <taxon>Bacillus cereus group</taxon>
    </lineage>
</organism>
<keyword id="KW-0963">Cytoplasm</keyword>
<keyword id="KW-0227">DNA damage</keyword>
<keyword id="KW-0228">DNA excision</keyword>
<keyword id="KW-0234">DNA repair</keyword>
<keyword id="KW-0267">Excision nuclease</keyword>
<keyword id="KW-0742">SOS response</keyword>
<proteinExistence type="inferred from homology"/>
<feature type="chain" id="PRO_1000200571" description="UvrABC system protein C">
    <location>
        <begin position="1"/>
        <end position="594"/>
    </location>
</feature>
<feature type="domain" description="GIY-YIG" evidence="1">
    <location>
        <begin position="14"/>
        <end position="91"/>
    </location>
</feature>
<feature type="domain" description="UVR" evidence="1">
    <location>
        <begin position="196"/>
        <end position="231"/>
    </location>
</feature>